<evidence type="ECO:0000250" key="1">
    <source>
        <dbReference type="UniProtKB" id="O95259"/>
    </source>
</evidence>
<evidence type="ECO:0000250" key="2">
    <source>
        <dbReference type="UniProtKB" id="Q60603"/>
    </source>
</evidence>
<evidence type="ECO:0000255" key="3"/>
<evidence type="ECO:0000255" key="4">
    <source>
        <dbReference type="PROSITE-ProRule" id="PRU00140"/>
    </source>
</evidence>
<evidence type="ECO:0000255" key="5">
    <source>
        <dbReference type="PROSITE-ProRule" id="PRU00141"/>
    </source>
</evidence>
<evidence type="ECO:0000256" key="6">
    <source>
        <dbReference type="SAM" id="MobiDB-lite"/>
    </source>
</evidence>
<evidence type="ECO:0000269" key="7">
    <source>
    </source>
</evidence>
<evidence type="ECO:0000269" key="8">
    <source>
    </source>
</evidence>
<evidence type="ECO:0000269" key="9">
    <source>
    </source>
</evidence>
<evidence type="ECO:0000269" key="10">
    <source>
    </source>
</evidence>
<evidence type="ECO:0000269" key="11">
    <source>
    </source>
</evidence>
<evidence type="ECO:0000269" key="12">
    <source>
    </source>
</evidence>
<evidence type="ECO:0000269" key="13">
    <source>
    </source>
</evidence>
<evidence type="ECO:0000269" key="14">
    <source>
    </source>
</evidence>
<evidence type="ECO:0000269" key="15">
    <source>
    </source>
</evidence>
<evidence type="ECO:0000269" key="16">
    <source>
    </source>
</evidence>
<evidence type="ECO:0000269" key="17">
    <source>
    </source>
</evidence>
<evidence type="ECO:0000303" key="18">
    <source>
    </source>
</evidence>
<evidence type="ECO:0000303" key="19">
    <source>
    </source>
</evidence>
<evidence type="ECO:0000303" key="20">
    <source>
    </source>
</evidence>
<evidence type="ECO:0000305" key="21"/>
<evidence type="ECO:0000305" key="22">
    <source>
    </source>
</evidence>
<evidence type="ECO:0000312" key="23">
    <source>
        <dbReference type="RGD" id="68398"/>
    </source>
</evidence>
<evidence type="ECO:0007744" key="24">
    <source>
        <dbReference type="PDB" id="5K7L"/>
    </source>
</evidence>
<evidence type="ECO:0007744" key="25">
    <source>
        <dbReference type="PDB" id="6PBX"/>
    </source>
</evidence>
<evidence type="ECO:0007744" key="26">
    <source>
        <dbReference type="PDB" id="6PBY"/>
    </source>
</evidence>
<evidence type="ECO:0007744" key="27">
    <source>
        <dbReference type="PDB" id="8EOW"/>
    </source>
</evidence>
<evidence type="ECO:0007744" key="28">
    <source>
        <dbReference type="PDB" id="8EP0"/>
    </source>
</evidence>
<evidence type="ECO:0007744" key="29">
    <source>
        <dbReference type="PDB" id="8EP1"/>
    </source>
</evidence>
<organism>
    <name type="scientific">Rattus norvegicus</name>
    <name type="common">Rat</name>
    <dbReference type="NCBI Taxonomy" id="10116"/>
    <lineage>
        <taxon>Eukaryota</taxon>
        <taxon>Metazoa</taxon>
        <taxon>Chordata</taxon>
        <taxon>Craniata</taxon>
        <taxon>Vertebrata</taxon>
        <taxon>Euteleostomi</taxon>
        <taxon>Mammalia</taxon>
        <taxon>Eutheria</taxon>
        <taxon>Euarchontoglires</taxon>
        <taxon>Glires</taxon>
        <taxon>Rodentia</taxon>
        <taxon>Myomorpha</taxon>
        <taxon>Muroidea</taxon>
        <taxon>Muridae</taxon>
        <taxon>Murinae</taxon>
        <taxon>Rattus</taxon>
    </lineage>
</organism>
<sequence>MTMAGGRRGLVAPQNTFLENIVRRSNDTNFVLGNAQIVDWPIVYSNDGFCKLSGYHRAEVMQKSSACSFMYGELTDKDTVEKVRQTFENYEMNSFEILMYKKNRTPVWFFVKIAPIRNEQDKVVLFLCTFSDITAFKQPIEDDSCKGWGKFARLTRALTSSRGVLQQLAPSVQKGENVHKHSRLAEVLQLGSDILPQYKQEAPKTPPHIILHYCVFKTTWDWIILILTFYTAILVPYNVSFKTRQNNVAWLVVDSIVDVIFLVDIVLNFHTTFVGPAGEVISDPKLIRMNYLKTWFVIDLLSCLPYDVINAFENVDEGISSLFSSLKVVRLLRLGRVARKLDHYIEYGAAVLVLLVCVFGLAAHWMACIWYSIGDYEIFDEDTKTIRNNSWLYQLALDIGTPYQFNGSGSGKWEGGPSKNSVYISSLYFTMTSLTSVGFGNIAPSTDIEKIFAVAIMMIGSLLYATIFGNVTTIFQQMYANTNRYHEMLNSVRDFLKLYQVPKGLSERVMDYIVSTWSMSRGIDTEKVLQICPKDMRADICVHLNRKVFKEHPAFRLASDGCLRALAMEFQTVHCAPGDLIYHAGESVDSLCFVVSGSLEVIQDDEVVAILGKGDVFGDVFWKEATLAQSCANVRALTYCDLHVIKRDALQKVLEFYTAFSHSFSRNLILTYNLRKRIVFRKISDVKREEEERMKRKNEAPLILPPDHPVRRLFQRFRQQKEARLAAERGGRDLDDLDVEKGNALTDHTSANHSLVKASVVTVRESPATPVSFQAASTSTVSDHAKLHAPGSECLGPKAGGGDPAKRKGWARFKDACGKGEDWNKVSKAESMETLPERTKASGEATLKKTDSCDSGITKSDLRLDNVGEARSPQDRSPILAEVKHSFYPIPEQTLQATVLEVKHELKEDIKALNAKMTSIEKQLSEILRILMSRGSSQSPQDTCEVSRPQSPESDRDIFGAS</sequence>
<keyword id="KW-0002">3D-structure</keyword>
<keyword id="KW-0112">Calmodulin-binding</keyword>
<keyword id="KW-1003">Cell membrane</keyword>
<keyword id="KW-0966">Cell projection</keyword>
<keyword id="KW-0967">Endosome</keyword>
<keyword id="KW-0325">Glycoprotein</keyword>
<keyword id="KW-0407">Ion channel</keyword>
<keyword id="KW-0406">Ion transport</keyword>
<keyword id="KW-0446">Lipid-binding</keyword>
<keyword id="KW-0472">Membrane</keyword>
<keyword id="KW-0539">Nucleus</keyword>
<keyword id="KW-0597">Phosphoprotein</keyword>
<keyword id="KW-0628">Postsynaptic cell membrane</keyword>
<keyword id="KW-0630">Potassium</keyword>
<keyword id="KW-0631">Potassium channel</keyword>
<keyword id="KW-0633">Potassium transport</keyword>
<keyword id="KW-1185">Reference proteome</keyword>
<keyword id="KW-0770">Synapse</keyword>
<keyword id="KW-0812">Transmembrane</keyword>
<keyword id="KW-1133">Transmembrane helix</keyword>
<keyword id="KW-0813">Transport</keyword>
<keyword id="KW-0851">Voltage-gated channel</keyword>
<proteinExistence type="evidence at protein level"/>
<comment type="function">
    <text evidence="1 10 12 13 15 16">Pore-forming (alpha) subunit of a voltage-gated delayed rectifier potassium channel that mediates outward-rectifying potassium currents which, on depolarization, reaches a steady-state level and do not inactivate (PubMed:24495567, PubMed:27516594, PubMed:31490124, PubMed:7925287, PubMed:9400421). The activation kinetics depend on the prepulse potential and external divalent cation concentration. With negative prepulses, the current activation is delayed and slowed down several fold, whereas more positive prepulses speed up activation. The time course of activation is biphasic with a fast and a slowly activating current component. Activates at more positive membrane potentials and exhibit a steeper activation curve (By similarity). Channel properties are modulated by subunit assembly. Mediates IK(NI) current in myoblasts. Involved in the regulation of cell proliferation and differentiation, in particular adipogenic and osteogenic differentiation in bone marrow-derived mesenchymal stem cells (MSCs) (By similarity).</text>
</comment>
<comment type="catalytic activity">
    <reaction evidence="10 12 13 15 16">
        <text>K(+)(in) = K(+)(out)</text>
        <dbReference type="Rhea" id="RHEA:29463"/>
        <dbReference type="ChEBI" id="CHEBI:29103"/>
    </reaction>
</comment>
<comment type="activity regulation">
    <text evidence="1 2 12">Channel activity is inhibited by interaction with Ca(2+)-bound calmodulin (PubMed:27516594). Interaction of a single pore-forming alpha subunit with a calmodulin chain is sufficient to promote channel closure. Channel activity is not regulated by cyclic nucleotides. Channel activity is inhibited by binding intracellular phosphatidylinositol-3,5-bisphosphate and phosphatidylinositol-4,5-bisphosphate (PIP2), but is not inhibited by phosphatidylinositol 4-phosphate (By similarity).</text>
</comment>
<comment type="subunit">
    <text evidence="1 8 9 12 16 17">Homomultimer (By similarity). The potassium channel is composed of a homo- or heterotetrameric complex of pore-forming alpha subunits that can associate with modulating beta subunits (PubMed:27516594, PubMed:9400421). Heteromultimer with KCNH5/EAG2 (By similarity). Interacts with ALG10B (PubMed:9722534). Interacts with RABEP1 (PubMed:22841712). Interacts (via C-terminus) with CTTN (PubMed:23144454). Interacts (via cytoplasmic region) with Ca(2+)-bound calmodulin (PubMed:27516594).</text>
</comment>
<comment type="interaction">
    <interactant intactId="EBI-7991592">
        <id>Q63472</id>
    </interactant>
    <interactant intactId="EBI-7991542">
        <id>O35550</id>
        <label>Rabep1</label>
    </interactant>
    <organismsDiffer>false</organismsDiffer>
    <experiments>2</experiments>
</comment>
<comment type="subcellular location">
    <subcellularLocation>
        <location evidence="10 12 15 16">Cell membrane</location>
        <topology evidence="12">Multi-pass membrane protein</topology>
    </subcellularLocation>
    <subcellularLocation>
        <location evidence="1">Nucleus inner membrane</location>
        <topology evidence="1">Multi-pass membrane protein</topology>
    </subcellularLocation>
    <subcellularLocation>
        <location evidence="10">Cell projection</location>
        <location evidence="10">Dendrite</location>
    </subcellularLocation>
    <subcellularLocation>
        <location evidence="10">Cell projection</location>
        <location evidence="10">Axon</location>
    </subcellularLocation>
    <subcellularLocation>
        <location evidence="11">Presynaptic cell membrane</location>
    </subcellularLocation>
    <subcellularLocation>
        <location evidence="10">Perikaryon</location>
    </subcellularLocation>
    <subcellularLocation>
        <location evidence="10">Postsynaptic density membrane</location>
    </subcellularLocation>
    <subcellularLocation>
        <location evidence="1">Early endosome membrane</location>
    </subcellularLocation>
    <text evidence="1">Perinuclear KCNH1 is located to NPC-free islands.</text>
</comment>
<comment type="tissue specificity">
    <text evidence="7 10 11 15">Detected in cerebellum, at parallel fiber synapses on Purkinje cell spines (PubMed:25556795). Detected in hippocampus neurons (at protein level) (PubMed:24495567). Detected in brain, but not in the other tissues tested; expression is highest in granular cells of the dentate gyrus, in hippocampus CA3 pyramidal cells, and in cerebellar granule cells (PubMed:7925287). Detected in pituitary (PubMed:10718922).</text>
</comment>
<comment type="domain">
    <text evidence="14 16">The segment S4 is probably the voltage-sensor and is characterized by a series of positively charged amino acids at every third position (PubMed:9400421). Conformational changes of voltage-sensor are driven by an electric field generated by a potassium gradient across the membrane (PubMed:36331999).</text>
</comment>
<comment type="domain">
    <text evidence="2">The C-terminal region interacts with the cyclic nucleotide-binding domain and contributes to regulate channel gating.</text>
</comment>
<comment type="domain">
    <text evidence="12">The PAS and PAC domain interact with the cyclic nucleotide-binding domain and contribute to the regulation of channel gating. Calmodulin binding clamps together the PAS and PAC domain with the cyclic nucleotide-binding domain from a neighboring subunit and causes a conformation change that leads to channel closure.</text>
</comment>
<comment type="domain">
    <text evidence="2">The cyclic nucleotide-binding domain lacks residues that are essential for nucleotide-binding and cannot bind cyclic nucleotides. Instead, residues from the C-terminal domain (the so-called intrinsic ligand) bind in the cavity that would be expected to bind cyclic nucleotides. Interaction with the C-terminal region hinders interaction with CALM and reduces the affinity for CALM.</text>
</comment>
<comment type="domain">
    <text evidence="13">The PAS and the cyclic nucleotide-binding domain (CNBHD) interact with the transmembrane voltage sensors (VS) that modulate voltage-dependent gating and provide evidence that VS movement destabilizes these interactions to promote channel opening.</text>
</comment>
<comment type="PTM">
    <text evidence="1">Channel activity is regulated via tyrosine phosphorylation/dephosphorylation by SRC and PTPN6.</text>
</comment>
<comment type="similarity">
    <text evidence="21">Belongs to the potassium channel family. H (Eag) (TC 1.A.1.20) subfamily. Kv10.1/KCNH1 sub-subfamily.</text>
</comment>
<gene>
    <name evidence="23" type="primary">Kcnh1</name>
    <name evidence="19" type="synonym">Eag</name>
    <name evidence="18" type="synonym">EAG1</name>
</gene>
<dbReference type="EMBL" id="Z34264">
    <property type="protein sequence ID" value="CAA84018.1"/>
    <property type="molecule type" value="mRNA"/>
</dbReference>
<dbReference type="PIR" id="I53197">
    <property type="entry name" value="I53197"/>
</dbReference>
<dbReference type="RefSeq" id="NP_113930.1">
    <property type="nucleotide sequence ID" value="NM_031742.3"/>
</dbReference>
<dbReference type="RefSeq" id="XP_006250553.1">
    <property type="nucleotide sequence ID" value="XM_006250491.3"/>
</dbReference>
<dbReference type="PDB" id="5K7L">
    <property type="method" value="EM"/>
    <property type="resolution" value="3.78 A"/>
    <property type="chains" value="A=1-962"/>
</dbReference>
<dbReference type="PDB" id="6PBX">
    <property type="method" value="EM"/>
    <property type="resolution" value="4.00 A"/>
    <property type="chains" value="A/C/E/G=14-962"/>
</dbReference>
<dbReference type="PDB" id="6PBY">
    <property type="method" value="EM"/>
    <property type="resolution" value="3.67 A"/>
    <property type="chains" value="A/C/E/G=14-962"/>
</dbReference>
<dbReference type="PDB" id="8EOW">
    <property type="method" value="EM"/>
    <property type="resolution" value="3.90 A"/>
    <property type="chains" value="A/B/C/D=10-722"/>
</dbReference>
<dbReference type="PDB" id="8EP0">
    <property type="method" value="EM"/>
    <property type="resolution" value="4.90 A"/>
    <property type="chains" value="A/B/C/D=10-722"/>
</dbReference>
<dbReference type="PDB" id="8EP1">
    <property type="method" value="EM"/>
    <property type="resolution" value="5.40 A"/>
    <property type="chains" value="A/B/C/D=10-722"/>
</dbReference>
<dbReference type="PDBsum" id="5K7L"/>
<dbReference type="PDBsum" id="6PBX"/>
<dbReference type="PDBsum" id="6PBY"/>
<dbReference type="PDBsum" id="8EOW"/>
<dbReference type="PDBsum" id="8EP0"/>
<dbReference type="PDBsum" id="8EP1"/>
<dbReference type="EMDB" id="EMD-20294"/>
<dbReference type="EMDB" id="EMD-20295"/>
<dbReference type="EMDB" id="EMD-28487"/>
<dbReference type="EMDB" id="EMD-28494"/>
<dbReference type="EMDB" id="EMD-28498"/>
<dbReference type="EMDB" id="EMD-8215"/>
<dbReference type="SMR" id="Q63472"/>
<dbReference type="BioGRID" id="249310">
    <property type="interactions" value="3"/>
</dbReference>
<dbReference type="FunCoup" id="Q63472">
    <property type="interactions" value="1636"/>
</dbReference>
<dbReference type="IntAct" id="Q63472">
    <property type="interactions" value="2"/>
</dbReference>
<dbReference type="MINT" id="Q63472"/>
<dbReference type="STRING" id="10116.ENSRNOP00000068394"/>
<dbReference type="ChEMBL" id="CHEMBL4295858"/>
<dbReference type="GuidetoPHARMACOLOGY" id="570"/>
<dbReference type="TCDB" id="1.A.1.20.4">
    <property type="family name" value="the voltage-gated ion channel (vic) superfamily"/>
</dbReference>
<dbReference type="GlyCosmos" id="Q63472">
    <property type="glycosylation" value="2 sites, No reported glycans"/>
</dbReference>
<dbReference type="GlyGen" id="Q63472">
    <property type="glycosylation" value="2 sites"/>
</dbReference>
<dbReference type="iPTMnet" id="Q63472"/>
<dbReference type="PhosphoSitePlus" id="Q63472"/>
<dbReference type="GeneID" id="65198"/>
<dbReference type="KEGG" id="rno:65198"/>
<dbReference type="AGR" id="RGD:68398"/>
<dbReference type="CTD" id="3756"/>
<dbReference type="RGD" id="68398">
    <property type="gene designation" value="Kcnh1"/>
</dbReference>
<dbReference type="VEuPathDB" id="HostDB:ENSRNOG00000003841"/>
<dbReference type="HOGENOM" id="CLU_005746_3_1_1"/>
<dbReference type="InParanoid" id="Q63472"/>
<dbReference type="OrthoDB" id="447251at2759"/>
<dbReference type="PhylomeDB" id="Q63472"/>
<dbReference type="Reactome" id="R-RNO-1296072">
    <property type="pathway name" value="Voltage gated Potassium channels"/>
</dbReference>
<dbReference type="PRO" id="PR:Q63472"/>
<dbReference type="Proteomes" id="UP000002494">
    <property type="component" value="Chromosome 13"/>
</dbReference>
<dbReference type="Bgee" id="ENSRNOG00000003841">
    <property type="expression patterns" value="Expressed in frontal cortex and 10 other cell types or tissues"/>
</dbReference>
<dbReference type="ExpressionAtlas" id="Q63472">
    <property type="expression patterns" value="baseline and differential"/>
</dbReference>
<dbReference type="GO" id="GO:0030673">
    <property type="term" value="C:axolemma"/>
    <property type="evidence" value="ECO:0000314"/>
    <property type="project" value="RGD"/>
</dbReference>
<dbReference type="GO" id="GO:0030424">
    <property type="term" value="C:axon"/>
    <property type="evidence" value="ECO:0000314"/>
    <property type="project" value="RGD"/>
</dbReference>
<dbReference type="GO" id="GO:0009986">
    <property type="term" value="C:cell surface"/>
    <property type="evidence" value="ECO:0000314"/>
    <property type="project" value="RGD"/>
</dbReference>
<dbReference type="GO" id="GO:0030425">
    <property type="term" value="C:dendrite"/>
    <property type="evidence" value="ECO:0000314"/>
    <property type="project" value="RGD"/>
</dbReference>
<dbReference type="GO" id="GO:0031901">
    <property type="term" value="C:early endosome membrane"/>
    <property type="evidence" value="ECO:0000250"/>
    <property type="project" value="UniProtKB"/>
</dbReference>
<dbReference type="GO" id="GO:0043025">
    <property type="term" value="C:neuronal cell body"/>
    <property type="evidence" value="ECO:0000314"/>
    <property type="project" value="RGD"/>
</dbReference>
<dbReference type="GO" id="GO:0005637">
    <property type="term" value="C:nuclear inner membrane"/>
    <property type="evidence" value="ECO:0000314"/>
    <property type="project" value="RGD"/>
</dbReference>
<dbReference type="GO" id="GO:0098688">
    <property type="term" value="C:parallel fiber to Purkinje cell synapse"/>
    <property type="evidence" value="ECO:0000266"/>
    <property type="project" value="RGD"/>
</dbReference>
<dbReference type="GO" id="GO:0043204">
    <property type="term" value="C:perikaryon"/>
    <property type="evidence" value="ECO:0007669"/>
    <property type="project" value="UniProtKB-SubCell"/>
</dbReference>
<dbReference type="GO" id="GO:0048471">
    <property type="term" value="C:perinuclear region of cytoplasm"/>
    <property type="evidence" value="ECO:0000314"/>
    <property type="project" value="RGD"/>
</dbReference>
<dbReference type="GO" id="GO:0005886">
    <property type="term" value="C:plasma membrane"/>
    <property type="evidence" value="ECO:0000314"/>
    <property type="project" value="UniProtKB"/>
</dbReference>
<dbReference type="GO" id="GO:0098839">
    <property type="term" value="C:postsynaptic density membrane"/>
    <property type="evidence" value="ECO:0000314"/>
    <property type="project" value="SynGO"/>
</dbReference>
<dbReference type="GO" id="GO:0034705">
    <property type="term" value="C:potassium channel complex"/>
    <property type="evidence" value="ECO:0000314"/>
    <property type="project" value="UniProtKB"/>
</dbReference>
<dbReference type="GO" id="GO:0042734">
    <property type="term" value="C:presynaptic membrane"/>
    <property type="evidence" value="ECO:0000314"/>
    <property type="project" value="RGD"/>
</dbReference>
<dbReference type="GO" id="GO:0008076">
    <property type="term" value="C:voltage-gated potassium channel complex"/>
    <property type="evidence" value="ECO:0000250"/>
    <property type="project" value="UniProtKB"/>
</dbReference>
<dbReference type="GO" id="GO:0071889">
    <property type="term" value="F:14-3-3 protein binding"/>
    <property type="evidence" value="ECO:0000353"/>
    <property type="project" value="RGD"/>
</dbReference>
<dbReference type="GO" id="GO:0005516">
    <property type="term" value="F:calmodulin binding"/>
    <property type="evidence" value="ECO:0000314"/>
    <property type="project" value="UniProtKB"/>
</dbReference>
<dbReference type="GO" id="GO:0005251">
    <property type="term" value="F:delayed rectifier potassium channel activity"/>
    <property type="evidence" value="ECO:0000314"/>
    <property type="project" value="UniProtKB"/>
</dbReference>
<dbReference type="GO" id="GO:0042802">
    <property type="term" value="F:identical protein binding"/>
    <property type="evidence" value="ECO:0000314"/>
    <property type="project" value="RGD"/>
</dbReference>
<dbReference type="GO" id="GO:1902936">
    <property type="term" value="F:phosphatidylinositol bisphosphate binding"/>
    <property type="evidence" value="ECO:0000250"/>
    <property type="project" value="UniProtKB"/>
</dbReference>
<dbReference type="GO" id="GO:0019901">
    <property type="term" value="F:protein kinase binding"/>
    <property type="evidence" value="ECO:0000353"/>
    <property type="project" value="RGD"/>
</dbReference>
<dbReference type="GO" id="GO:0044877">
    <property type="term" value="F:protein-containing complex binding"/>
    <property type="evidence" value="ECO:0000353"/>
    <property type="project" value="RGD"/>
</dbReference>
<dbReference type="GO" id="GO:0044325">
    <property type="term" value="F:transmembrane transporter binding"/>
    <property type="evidence" value="ECO:0000353"/>
    <property type="project" value="RGD"/>
</dbReference>
<dbReference type="GO" id="GO:0099508">
    <property type="term" value="F:voltage-gated monoatomic ion channel activity involved in regulation of presynaptic membrane potential"/>
    <property type="evidence" value="ECO:0000266"/>
    <property type="project" value="RGD"/>
</dbReference>
<dbReference type="GO" id="GO:0071277">
    <property type="term" value="P:cellular response to calcium ion"/>
    <property type="evidence" value="ECO:0000314"/>
    <property type="project" value="UniProtKB"/>
</dbReference>
<dbReference type="GO" id="GO:0034220">
    <property type="term" value="P:monoatomic ion transmembrane transport"/>
    <property type="evidence" value="ECO:0000314"/>
    <property type="project" value="RGD"/>
</dbReference>
<dbReference type="GO" id="GO:0071805">
    <property type="term" value="P:potassium ion transmembrane transport"/>
    <property type="evidence" value="ECO:0000314"/>
    <property type="project" value="RGD"/>
</dbReference>
<dbReference type="GO" id="GO:0006813">
    <property type="term" value="P:potassium ion transport"/>
    <property type="evidence" value="ECO:0000314"/>
    <property type="project" value="UniProtKB"/>
</dbReference>
<dbReference type="GO" id="GO:0042127">
    <property type="term" value="P:regulation of cell population proliferation"/>
    <property type="evidence" value="ECO:0000250"/>
    <property type="project" value="UniProtKB"/>
</dbReference>
<dbReference type="GO" id="GO:0042391">
    <property type="term" value="P:regulation of membrane potential"/>
    <property type="evidence" value="ECO:0000318"/>
    <property type="project" value="GO_Central"/>
</dbReference>
<dbReference type="GO" id="GO:0099509">
    <property type="term" value="P:regulation of presynaptic cytosolic calcium ion concentration"/>
    <property type="evidence" value="ECO:0000266"/>
    <property type="project" value="RGD"/>
</dbReference>
<dbReference type="GO" id="GO:2000300">
    <property type="term" value="P:regulation of synaptic vesicle exocytosis"/>
    <property type="evidence" value="ECO:0000266"/>
    <property type="project" value="RGD"/>
</dbReference>
<dbReference type="GO" id="GO:0001964">
    <property type="term" value="P:startle response"/>
    <property type="evidence" value="ECO:0000315"/>
    <property type="project" value="RGD"/>
</dbReference>
<dbReference type="CDD" id="cd00038">
    <property type="entry name" value="CAP_ED"/>
    <property type="match status" value="1"/>
</dbReference>
<dbReference type="CDD" id="cd00130">
    <property type="entry name" value="PAS"/>
    <property type="match status" value="1"/>
</dbReference>
<dbReference type="FunFam" id="1.10.1200.260:FF:000003">
    <property type="entry name" value="Potassium voltage-gated channel subfamily H member 1"/>
    <property type="match status" value="1"/>
</dbReference>
<dbReference type="FunFam" id="2.60.120.10:FF:000009">
    <property type="entry name" value="Potassium voltage-gated channel subfamily H member 1"/>
    <property type="match status" value="1"/>
</dbReference>
<dbReference type="FunFam" id="3.30.450.20:FF:000009">
    <property type="entry name" value="Potassium voltage-gated channel subfamily H member 1"/>
    <property type="match status" value="1"/>
</dbReference>
<dbReference type="FunFam" id="1.10.287.70:FF:000035">
    <property type="entry name" value="Potassium voltage-gated channel, subfamily H (Eag-related), member 1"/>
    <property type="match status" value="1"/>
</dbReference>
<dbReference type="Gene3D" id="1.10.1200.260">
    <property type="match status" value="1"/>
</dbReference>
<dbReference type="Gene3D" id="1.10.287.70">
    <property type="match status" value="1"/>
</dbReference>
<dbReference type="Gene3D" id="2.60.120.10">
    <property type="entry name" value="Jelly Rolls"/>
    <property type="match status" value="1"/>
</dbReference>
<dbReference type="Gene3D" id="3.30.450.20">
    <property type="entry name" value="PAS domain"/>
    <property type="match status" value="1"/>
</dbReference>
<dbReference type="InterPro" id="IPR000595">
    <property type="entry name" value="cNMP-bd_dom"/>
</dbReference>
<dbReference type="InterPro" id="IPR018490">
    <property type="entry name" value="cNMP-bd_dom_sf"/>
</dbReference>
<dbReference type="InterPro" id="IPR005821">
    <property type="entry name" value="Ion_trans_dom"/>
</dbReference>
<dbReference type="InterPro" id="IPR003949">
    <property type="entry name" value="K_chnl_volt-dep_EAG"/>
</dbReference>
<dbReference type="InterPro" id="IPR003938">
    <property type="entry name" value="K_chnl_volt-dep_EAG/ELK/ERG"/>
</dbReference>
<dbReference type="InterPro" id="IPR050818">
    <property type="entry name" value="KCNH_animal-type"/>
</dbReference>
<dbReference type="InterPro" id="IPR001610">
    <property type="entry name" value="PAC"/>
</dbReference>
<dbReference type="InterPro" id="IPR000014">
    <property type="entry name" value="PAS"/>
</dbReference>
<dbReference type="InterPro" id="IPR000700">
    <property type="entry name" value="PAS-assoc_C"/>
</dbReference>
<dbReference type="InterPro" id="IPR035965">
    <property type="entry name" value="PAS-like_dom_sf"/>
</dbReference>
<dbReference type="InterPro" id="IPR014710">
    <property type="entry name" value="RmlC-like_jellyroll"/>
</dbReference>
<dbReference type="NCBIfam" id="TIGR00229">
    <property type="entry name" value="sensory_box"/>
    <property type="match status" value="1"/>
</dbReference>
<dbReference type="PANTHER" id="PTHR10217:SF530">
    <property type="entry name" value="POTASSIUM VOLTAGE-GATED CHANNEL SUBFAMILY H MEMBER 1"/>
    <property type="match status" value="1"/>
</dbReference>
<dbReference type="PANTHER" id="PTHR10217">
    <property type="entry name" value="VOLTAGE AND LIGAND GATED POTASSIUM CHANNEL"/>
    <property type="match status" value="1"/>
</dbReference>
<dbReference type="Pfam" id="PF00027">
    <property type="entry name" value="cNMP_binding"/>
    <property type="match status" value="1"/>
</dbReference>
<dbReference type="Pfam" id="PF00520">
    <property type="entry name" value="Ion_trans"/>
    <property type="match status" value="1"/>
</dbReference>
<dbReference type="Pfam" id="PF13426">
    <property type="entry name" value="PAS_9"/>
    <property type="match status" value="1"/>
</dbReference>
<dbReference type="PRINTS" id="PR01463">
    <property type="entry name" value="EAGCHANLFMLY"/>
</dbReference>
<dbReference type="PRINTS" id="PR01464">
    <property type="entry name" value="EAGCHANNEL"/>
</dbReference>
<dbReference type="SMART" id="SM00100">
    <property type="entry name" value="cNMP"/>
    <property type="match status" value="1"/>
</dbReference>
<dbReference type="SMART" id="SM00086">
    <property type="entry name" value="PAC"/>
    <property type="match status" value="1"/>
</dbReference>
<dbReference type="SUPFAM" id="SSF51206">
    <property type="entry name" value="cAMP-binding domain-like"/>
    <property type="match status" value="1"/>
</dbReference>
<dbReference type="SUPFAM" id="SSF55785">
    <property type="entry name" value="PYP-like sensor domain (PAS domain)"/>
    <property type="match status" value="1"/>
</dbReference>
<dbReference type="SUPFAM" id="SSF81324">
    <property type="entry name" value="Voltage-gated potassium channels"/>
    <property type="match status" value="1"/>
</dbReference>
<dbReference type="PROSITE" id="PS50042">
    <property type="entry name" value="CNMP_BINDING_3"/>
    <property type="match status" value="1"/>
</dbReference>
<dbReference type="PROSITE" id="PS50113">
    <property type="entry name" value="PAC"/>
    <property type="match status" value="1"/>
</dbReference>
<dbReference type="PROSITE" id="PS50112">
    <property type="entry name" value="PAS"/>
    <property type="match status" value="1"/>
</dbReference>
<accession>Q63472</accession>
<feature type="chain" id="PRO_0000053996" description="Voltage-gated delayed rectifier potassium channel KCNH1">
    <location>
        <begin position="1"/>
        <end position="962"/>
    </location>
</feature>
<feature type="topological domain" description="Cytoplasmic" evidence="12">
    <location>
        <begin position="1"/>
        <end position="220"/>
    </location>
</feature>
<feature type="transmembrane region" description="Helical; Name=Segment S1" evidence="12">
    <location>
        <begin position="221"/>
        <end position="241"/>
    </location>
</feature>
<feature type="topological domain" description="Extracellular" evidence="12">
    <location>
        <begin position="242"/>
        <end position="248"/>
    </location>
</feature>
<feature type="transmembrane region" description="Helical; Name=Segment S2" evidence="12">
    <location>
        <begin position="249"/>
        <end position="269"/>
    </location>
</feature>
<feature type="topological domain" description="Cytoplasmic" evidence="12">
    <location>
        <begin position="270"/>
        <end position="290"/>
    </location>
</feature>
<feature type="transmembrane region" description="Helical; Name=Segment S3" evidence="12">
    <location>
        <begin position="291"/>
        <end position="309"/>
    </location>
</feature>
<feature type="topological domain" description="Extracellular" evidence="12">
    <location>
        <begin position="310"/>
        <end position="318"/>
    </location>
</feature>
<feature type="transmembrane region" description="Helical; Voltage-sensor; Name=Segment S4" evidence="12">
    <location>
        <begin position="319"/>
        <end position="341"/>
    </location>
</feature>
<feature type="topological domain" description="Cytoplasmic" evidence="12">
    <location>
        <begin position="342"/>
        <end position="350"/>
    </location>
</feature>
<feature type="transmembrane region" description="Helical; Name=Segment S5" evidence="12">
    <location>
        <begin position="351"/>
        <end position="372"/>
    </location>
</feature>
<feature type="topological domain" description="Extracellular" evidence="12">
    <location>
        <begin position="373"/>
        <end position="421"/>
    </location>
</feature>
<feature type="intramembrane region" description="Pore-forming; Name=Segment H5" evidence="12">
    <location>
        <begin position="422"/>
        <end position="443"/>
    </location>
</feature>
<feature type="topological domain" description="Extracellular" evidence="12">
    <location>
        <begin position="444"/>
        <end position="450"/>
    </location>
</feature>
<feature type="transmembrane region" description="Helical; Name=Segment S6" evidence="12">
    <location>
        <begin position="451"/>
        <end position="471"/>
    </location>
</feature>
<feature type="topological domain" description="Cytoplasmic" evidence="12">
    <location>
        <begin position="472"/>
        <end position="962"/>
    </location>
</feature>
<feature type="domain" description="PAS" evidence="4">
    <location>
        <begin position="14"/>
        <end position="94"/>
    </location>
</feature>
<feature type="domain" description="PAC" evidence="5">
    <location>
        <begin position="93"/>
        <end position="145"/>
    </location>
</feature>
<feature type="region of interest" description="Required for phosphatidylinositol bisphosphate binding" evidence="1">
    <location>
        <begin position="151"/>
        <end position="162"/>
    </location>
</feature>
<feature type="region of interest" description="Calmodulin-binding" evidence="2">
    <location>
        <begin position="646"/>
        <end position="743"/>
    </location>
</feature>
<feature type="region of interest" description="Interaction with cyclic nucleotide-binding pocket" evidence="2">
    <location>
        <begin position="672"/>
        <end position="674"/>
    </location>
</feature>
<feature type="region of interest" description="Disordered" evidence="6">
    <location>
        <begin position="830"/>
        <end position="859"/>
    </location>
</feature>
<feature type="region of interest" description="CAD (involved in subunit assembly)" evidence="16">
    <location>
        <begin position="897"/>
        <end position="937"/>
    </location>
</feature>
<feature type="region of interest" description="Disordered" evidence="6">
    <location>
        <begin position="933"/>
        <end position="962"/>
    </location>
</feature>
<feature type="short sequence motif" description="Selectivity filter" evidence="12">
    <location>
        <begin position="436"/>
        <end position="441"/>
    </location>
</feature>
<feature type="compositionally biased region" description="Basic and acidic residues" evidence="6">
    <location>
        <begin position="830"/>
        <end position="852"/>
    </location>
</feature>
<feature type="compositionally biased region" description="Polar residues" evidence="6">
    <location>
        <begin position="934"/>
        <end position="952"/>
    </location>
</feature>
<feature type="compositionally biased region" description="Basic and acidic residues" evidence="6">
    <location>
        <begin position="953"/>
        <end position="962"/>
    </location>
</feature>
<feature type="modified residue" description="Phosphoserine" evidence="2">
    <location>
        <position position="947"/>
    </location>
</feature>
<feature type="modified residue" description="Phosphoserine" evidence="2">
    <location>
        <position position="951"/>
    </location>
</feature>
<feature type="modified residue" description="Phosphoserine" evidence="2">
    <location>
        <position position="954"/>
    </location>
</feature>
<feature type="glycosylation site" description="N-linked (GlcNAc...) asparagine" evidence="3 12">
    <location>
        <position position="388"/>
    </location>
</feature>
<feature type="glycosylation site" description="N-linked (GlcNAc...) asparagine" evidence="3">
    <location>
        <position position="406"/>
    </location>
</feature>
<name>KCNH1_RAT</name>
<protein>
    <recommendedName>
        <fullName evidence="21">Voltage-gated delayed rectifier potassium channel KCNH1</fullName>
    </recommendedName>
    <alternativeName>
        <fullName evidence="1">Ether-a-go-go potassium channel 1</fullName>
        <shortName evidence="1">EAG channel 1</shortName>
        <shortName evidence="20">r-eag</shortName>
    </alternativeName>
    <alternativeName>
        <fullName>Potassium voltage-gated channel subfamily H member 1</fullName>
    </alternativeName>
    <alternativeName>
        <fullName evidence="22">Voltage-gated potassium channel subunit Kv10.1</fullName>
    </alternativeName>
</protein>
<reference key="1">
    <citation type="journal article" date="1994" name="EMBO J.">
        <title>Functional expression of a rat homologue of the voltage gated ether a go-go potassium channel reveals differences in selectivity and activation kinetics between the Drosophila channel and its mammalian counterpart.</title>
        <authorList>
            <person name="Ludwig J."/>
            <person name="Terlau H."/>
            <person name="Wunder F."/>
            <person name="Brueggemann A."/>
            <person name="Pardo L.A."/>
            <person name="Marquardt A."/>
            <person name="Stuehmer W."/>
            <person name="Pongs O."/>
        </authorList>
    </citation>
    <scope>NUCLEOTIDE SEQUENCE [MRNA]</scope>
    <scope>FUNCTION</scope>
    <scope>TRANSPORTER ACTIVITY</scope>
    <scope>SUBCELLULAR LOCATION</scope>
    <scope>TISSUE SPECIFICITY</scope>
    <source>
        <tissue>Cerebellum</tissue>
    </source>
</reference>
<reference key="2">
    <citation type="journal article" date="1997" name="EMBO J.">
        <title>Carboxy-terminal domain mediates assembly of the voltage-gated rat ether-a-go-go potassium channel.</title>
        <authorList>
            <person name="Ludwig J."/>
            <person name="Owen D."/>
            <person name="Pongs O."/>
        </authorList>
    </citation>
    <scope>FUNCTION</scope>
    <scope>TRANSPORTER ACTIVITY</scope>
    <scope>SUBCELLULAR LOCATION</scope>
    <scope>DOMAIN CAD</scope>
    <scope>SUBUNIT</scope>
</reference>
<reference key="3">
    <citation type="journal article" date="1998" name="J. Biol. Chem.">
        <title>KCR1, a membrane protein that facilitates functional expression of non-inactivating K+ currents associates with rat EAG voltage-dependent K+ channels.</title>
        <authorList>
            <person name="Hoshi N."/>
            <person name="Takahashi H."/>
            <person name="Shahidullah M."/>
            <person name="Yokoyama S."/>
            <person name="Higashida H."/>
        </authorList>
    </citation>
    <scope>INTERACTION WITH ALG10B</scope>
    <source>
        <strain>Wistar</strain>
        <tissue>Cerebellum</tissue>
    </source>
</reference>
<reference key="4">
    <citation type="journal article" date="2000" name="J. Neuroendocrinol.">
        <title>Expression of mRNA for voltage-dependent and inward-rectifying K channels in GH3/B6 cells and rat pituitary.</title>
        <authorList>
            <person name="Wulfsen I."/>
            <person name="Hauber H.-P."/>
            <person name="Schiemann D."/>
            <person name="Bauer C.K."/>
            <person name="Schwarz J.R."/>
        </authorList>
    </citation>
    <scope>TISSUE SPECIFICITY</scope>
</reference>
<reference key="5">
    <citation type="journal article" date="2012" name="FEBS Lett.">
        <title>Physical and functional interaction of KV10.1 with Rabaptin-5 impacts ion channel trafficking.</title>
        <authorList>
            <person name="Ninkovic M."/>
            <person name="Mitkovski M."/>
            <person name="Kohl T."/>
            <person name="Stuhmer W."/>
            <person name="Pardo L.A."/>
        </authorList>
    </citation>
    <scope>INTERACTION WITH RABEP1</scope>
</reference>
<reference key="6">
    <citation type="journal article" date="2012" name="J. Biol. Chem.">
        <title>Cortactin controls surface expression of the voltage-gated potassium channel K(V)10.1.</title>
        <authorList>
            <person name="Herrmann S."/>
            <person name="Ninkovic M."/>
            <person name="Kohl T."/>
            <person name="Lorinczi E."/>
            <person name="Pardo L.A."/>
        </authorList>
    </citation>
    <scope>INTERACTION WITH CTTN</scope>
</reference>
<reference key="7">
    <citation type="journal article" date="2014" name="BMC Neurosci.">
        <title>The punctate localization of rat Eag1 K+ channels is conferred by the proximal post-CNBHD region.</title>
        <authorList>
            <person name="Chuang C.C."/>
            <person name="Jow G.M."/>
            <person name="Lin H.M."/>
            <person name="Weng Y.H."/>
            <person name="Hu J.H."/>
            <person name="Peng Y.J."/>
            <person name="Chiu Y.C."/>
            <person name="Chiu M.M."/>
            <person name="Jeng C.J."/>
        </authorList>
    </citation>
    <scope>FUNCTION</scope>
    <scope>TRANSPORTER ACTIVITY</scope>
    <scope>SUBCELLULAR LOCATION</scope>
    <scope>TISSUE SPECIFICITY</scope>
</reference>
<reference key="8">
    <citation type="journal article" date="2015" name="J. Physiol. (Lond.)">
        <title>KV 10.1 opposes activity-dependent increase in Ca2+ influx into the presynaptic terminal of the parallel fibre-Purkinje cell synapse.</title>
        <authorList>
            <person name="Mortensen L.S."/>
            <person name="Schmidt H."/>
            <person name="Farsi Z."/>
            <person name="Barrantes-Freer A."/>
            <person name="Rubio M.E."/>
            <person name="Ufartes R."/>
            <person name="Eilers J."/>
            <person name="Sakaba T."/>
            <person name="Stuehmer W."/>
            <person name="Pardo L.A."/>
        </authorList>
    </citation>
    <scope>SUBCELLULAR LOCATION</scope>
    <scope>TISSUE SPECIFICITY</scope>
</reference>
<reference evidence="24" key="9">
    <citation type="journal article" date="2016" name="Science">
        <title>Structure of the voltage-gated K(+) channel Eag1 reveals an alternative voltage sensing mechanism.</title>
        <authorList>
            <person name="Whicher J.R."/>
            <person name="MacKinnon R."/>
        </authorList>
    </citation>
    <scope>STRUCTURE BY ELECTRON MICROSCOPY (3.78 ANGSTROMS) OF 1-962 IN COMPLEX WITH CALM</scope>
    <scope>FUNCTION</scope>
    <scope>TRANSPORTER ACTIVITY</scope>
    <scope>ACTIVITY REGULATION</scope>
    <scope>SUBUNIT</scope>
    <scope>SUBCELLULAR LOCATION</scope>
    <scope>TOPOLOGY</scope>
    <scope>GLYCOSYLATION AT ASN-388</scope>
</reference>
<reference evidence="25 26" key="10">
    <citation type="journal article" date="2019" name="Elife">
        <title>Regulation of Eag1 gating by its intracellular domains.</title>
        <authorList>
            <person name="Whicher J.R."/>
            <person name="MacKinnon R."/>
        </authorList>
    </citation>
    <scope>STRUCTURE BY ELECTRON MICROSCOPY (3.67 ANGSTROMS) OF 14-962 IN COMPLEX WITH CALM</scope>
    <scope>FUNCTION</scope>
    <scope>TRANSPORTER ACTIVITY</scope>
    <scope>DOMAIN</scope>
</reference>
<reference evidence="27 28 29" key="11">
    <citation type="journal article" date="2022" name="Proc. Natl. Acad. Sci. U.S.A.">
        <title>Voltage-sensor movements in the Eag Kv channel under an applied electric field.</title>
        <authorList>
            <person name="Mandala V.S."/>
            <person name="MacKinnon R."/>
        </authorList>
    </citation>
    <scope>STRUCTURE BY ELECTRON MICROSCOPY (3.90 ANGSTROMS) OF 10-722 IN COMPLEX WITH CALM</scope>
    <scope>DOMAIN</scope>
</reference>